<protein>
    <recommendedName>
        <fullName>Hemoglobin subunit alpha-3</fullName>
    </recommendedName>
    <alternativeName>
        <fullName>Alpha-3-globin</fullName>
    </alternativeName>
    <alternativeName>
        <fullName>Hemoglobin alpha-2 chain</fullName>
    </alternativeName>
</protein>
<keyword id="KW-0903">Direct protein sequencing</keyword>
<keyword id="KW-0349">Heme</keyword>
<keyword id="KW-0408">Iron</keyword>
<keyword id="KW-0479">Metal-binding</keyword>
<keyword id="KW-0561">Oxygen transport</keyword>
<keyword id="KW-1185">Reference proteome</keyword>
<keyword id="KW-0813">Transport</keyword>
<dbReference type="PIR" id="A02258">
    <property type="entry name" value="HAGO3"/>
</dbReference>
<dbReference type="InParanoid" id="P01934"/>
<dbReference type="Proteomes" id="UP000001519">
    <property type="component" value="Unplaced"/>
</dbReference>
<dbReference type="GO" id="GO:0031838">
    <property type="term" value="C:haptoglobin-hemoglobin complex"/>
    <property type="evidence" value="ECO:0000318"/>
    <property type="project" value="GO_Central"/>
</dbReference>
<dbReference type="GO" id="GO:0005833">
    <property type="term" value="C:hemoglobin complex"/>
    <property type="evidence" value="ECO:0000318"/>
    <property type="project" value="GO_Central"/>
</dbReference>
<dbReference type="GO" id="GO:0020037">
    <property type="term" value="F:heme binding"/>
    <property type="evidence" value="ECO:0000318"/>
    <property type="project" value="GO_Central"/>
</dbReference>
<dbReference type="GO" id="GO:0005506">
    <property type="term" value="F:iron ion binding"/>
    <property type="evidence" value="ECO:0007669"/>
    <property type="project" value="InterPro"/>
</dbReference>
<dbReference type="GO" id="GO:0019825">
    <property type="term" value="F:oxygen binding"/>
    <property type="evidence" value="ECO:0000318"/>
    <property type="project" value="GO_Central"/>
</dbReference>
<dbReference type="GO" id="GO:0005344">
    <property type="term" value="F:oxygen carrier activity"/>
    <property type="evidence" value="ECO:0000318"/>
    <property type="project" value="GO_Central"/>
</dbReference>
<dbReference type="GO" id="GO:0098869">
    <property type="term" value="P:cellular oxidant detoxification"/>
    <property type="evidence" value="ECO:0007669"/>
    <property type="project" value="GOC"/>
</dbReference>
<dbReference type="GO" id="GO:0042744">
    <property type="term" value="P:hydrogen peroxide catabolic process"/>
    <property type="evidence" value="ECO:0000318"/>
    <property type="project" value="GO_Central"/>
</dbReference>
<dbReference type="CDD" id="cd08927">
    <property type="entry name" value="Hb-alpha-like"/>
    <property type="match status" value="1"/>
</dbReference>
<dbReference type="FunFam" id="1.10.490.10:FF:000002">
    <property type="entry name" value="Hemoglobin subunit alpha"/>
    <property type="match status" value="1"/>
</dbReference>
<dbReference type="Gene3D" id="1.10.490.10">
    <property type="entry name" value="Globins"/>
    <property type="match status" value="1"/>
</dbReference>
<dbReference type="InterPro" id="IPR000971">
    <property type="entry name" value="Globin"/>
</dbReference>
<dbReference type="InterPro" id="IPR009050">
    <property type="entry name" value="Globin-like_sf"/>
</dbReference>
<dbReference type="InterPro" id="IPR012292">
    <property type="entry name" value="Globin/Proto"/>
</dbReference>
<dbReference type="InterPro" id="IPR002338">
    <property type="entry name" value="Hemoglobin_a-typ"/>
</dbReference>
<dbReference type="InterPro" id="IPR050056">
    <property type="entry name" value="Hemoglobin_oxygen_transport"/>
</dbReference>
<dbReference type="InterPro" id="IPR002339">
    <property type="entry name" value="Hemoglobin_pi"/>
</dbReference>
<dbReference type="PANTHER" id="PTHR11442">
    <property type="entry name" value="HEMOGLOBIN FAMILY MEMBER"/>
    <property type="match status" value="1"/>
</dbReference>
<dbReference type="PANTHER" id="PTHR11442:SF79">
    <property type="entry name" value="HEMOGLOBIN SUBUNIT ALPHA-3"/>
    <property type="match status" value="1"/>
</dbReference>
<dbReference type="Pfam" id="PF00042">
    <property type="entry name" value="Globin"/>
    <property type="match status" value="1"/>
</dbReference>
<dbReference type="PRINTS" id="PR00612">
    <property type="entry name" value="ALPHAHAEM"/>
</dbReference>
<dbReference type="PRINTS" id="PR00815">
    <property type="entry name" value="PIHAEM"/>
</dbReference>
<dbReference type="SUPFAM" id="SSF46458">
    <property type="entry name" value="Globin-like"/>
    <property type="match status" value="1"/>
</dbReference>
<dbReference type="PROSITE" id="PS01033">
    <property type="entry name" value="GLOBIN"/>
    <property type="match status" value="1"/>
</dbReference>
<evidence type="ECO:0000255" key="1">
    <source>
        <dbReference type="PROSITE-ProRule" id="PRU00238"/>
    </source>
</evidence>
<comment type="function">
    <text>Involved in oxygen transport from the lung to the various peripheral tissues.</text>
</comment>
<comment type="subunit">
    <text>Heterotetramer of two alpha chains and two beta chains.</text>
</comment>
<comment type="tissue specificity">
    <text>Red blood cells.</text>
</comment>
<comment type="miscellaneous">
    <text>Two kinds of alpha-3 chains were found in one gorilla. An Asx replaces one Ser (at position 131, 133, or 138) in the tryptic peptide comprising residues 128-139.</text>
</comment>
<comment type="similarity">
    <text evidence="1">Belongs to the globin family.</text>
</comment>
<sequence>VLSPADKTNVKAAWGKVGAHAGDYGAEALERMFLSFPTTKTYFPHFDLSHGSAZVKGHGKKVAKALTBAVZHLDDMPNALSALSBLHAHKLRVBPVBFKLLNHCLLVTLAABFPSZFTPAVHASVDKFLASVSTVLTSKYR</sequence>
<reference key="1">
    <citation type="journal article" date="1973" name="J. Biol. Chem.">
        <title>Hemoglobin alpha-3 chains in apes. Primary structures and the presumptive nature of back mutation in a normally silent gene.</title>
        <authorList>
            <person name="Boyer S.H."/>
            <person name="Noyes A.N."/>
            <person name="Boyer M.L."/>
            <person name="Marr K."/>
        </authorList>
    </citation>
    <scope>PROTEIN SEQUENCE</scope>
</reference>
<accession>P01934</accession>
<organism>
    <name type="scientific">Gorilla gorilla gorilla</name>
    <name type="common">Western lowland gorilla</name>
    <dbReference type="NCBI Taxonomy" id="9595"/>
    <lineage>
        <taxon>Eukaryota</taxon>
        <taxon>Metazoa</taxon>
        <taxon>Chordata</taxon>
        <taxon>Craniata</taxon>
        <taxon>Vertebrata</taxon>
        <taxon>Euteleostomi</taxon>
        <taxon>Mammalia</taxon>
        <taxon>Eutheria</taxon>
        <taxon>Euarchontoglires</taxon>
        <taxon>Primates</taxon>
        <taxon>Haplorrhini</taxon>
        <taxon>Catarrhini</taxon>
        <taxon>Hominidae</taxon>
        <taxon>Gorilla</taxon>
    </lineage>
</organism>
<proteinExistence type="evidence at protein level"/>
<name>HBA3_GORGO</name>
<feature type="chain" id="PRO_0000052643" description="Hemoglobin subunit alpha-3">
    <location>
        <begin position="1"/>
        <end position="141"/>
    </location>
</feature>
<feature type="domain" description="Globin" evidence="1">
    <location>
        <begin position="1"/>
        <end position="141"/>
    </location>
</feature>
<feature type="binding site" evidence="1">
    <location>
        <position position="58"/>
    </location>
    <ligand>
        <name>O2</name>
        <dbReference type="ChEBI" id="CHEBI:15379"/>
    </ligand>
</feature>
<feature type="binding site" description="proximal binding residue" evidence="1">
    <location>
        <position position="87"/>
    </location>
    <ligand>
        <name>heme b</name>
        <dbReference type="ChEBI" id="CHEBI:60344"/>
    </ligand>
    <ligandPart>
        <name>Fe</name>
        <dbReference type="ChEBI" id="CHEBI:18248"/>
    </ligandPart>
</feature>